<keyword id="KW-0489">Methyltransferase</keyword>
<keyword id="KW-1185">Reference proteome</keyword>
<keyword id="KW-0949">S-adenosyl-L-methionine</keyword>
<keyword id="KW-0808">Transferase</keyword>
<keyword id="KW-0831">Ubiquinone biosynthesis</keyword>
<feature type="chain" id="PRO_0000193394" description="Ubiquinone biosynthesis O-methyltransferase">
    <location>
        <begin position="1"/>
        <end position="238"/>
    </location>
</feature>
<feature type="binding site" evidence="1">
    <location>
        <position position="40"/>
    </location>
    <ligand>
        <name>S-adenosyl-L-methionine</name>
        <dbReference type="ChEBI" id="CHEBI:59789"/>
    </ligand>
</feature>
<feature type="binding site" evidence="1">
    <location>
        <position position="59"/>
    </location>
    <ligand>
        <name>S-adenosyl-L-methionine</name>
        <dbReference type="ChEBI" id="CHEBI:59789"/>
    </ligand>
</feature>
<feature type="binding site" evidence="1">
    <location>
        <position position="80"/>
    </location>
    <ligand>
        <name>S-adenosyl-L-methionine</name>
        <dbReference type="ChEBI" id="CHEBI:59789"/>
    </ligand>
</feature>
<feature type="binding site" evidence="1">
    <location>
        <position position="124"/>
    </location>
    <ligand>
        <name>S-adenosyl-L-methionine</name>
        <dbReference type="ChEBI" id="CHEBI:59789"/>
    </ligand>
</feature>
<comment type="function">
    <text evidence="1">O-methyltransferase that catalyzes the 2 O-methylation steps in the ubiquinone biosynthetic pathway.</text>
</comment>
<comment type="catalytic activity">
    <reaction evidence="1">
        <text>a 3-demethylubiquinol + S-adenosyl-L-methionine = a ubiquinol + S-adenosyl-L-homocysteine + H(+)</text>
        <dbReference type="Rhea" id="RHEA:44380"/>
        <dbReference type="Rhea" id="RHEA-COMP:9566"/>
        <dbReference type="Rhea" id="RHEA-COMP:10914"/>
        <dbReference type="ChEBI" id="CHEBI:15378"/>
        <dbReference type="ChEBI" id="CHEBI:17976"/>
        <dbReference type="ChEBI" id="CHEBI:57856"/>
        <dbReference type="ChEBI" id="CHEBI:59789"/>
        <dbReference type="ChEBI" id="CHEBI:84422"/>
        <dbReference type="EC" id="2.1.1.64"/>
    </reaction>
</comment>
<comment type="catalytic activity">
    <reaction evidence="1">
        <text>a 3-(all-trans-polyprenyl)benzene-1,2-diol + S-adenosyl-L-methionine = a 2-methoxy-6-(all-trans-polyprenyl)phenol + S-adenosyl-L-homocysteine + H(+)</text>
        <dbReference type="Rhea" id="RHEA:31411"/>
        <dbReference type="Rhea" id="RHEA-COMP:9550"/>
        <dbReference type="Rhea" id="RHEA-COMP:9551"/>
        <dbReference type="ChEBI" id="CHEBI:15378"/>
        <dbReference type="ChEBI" id="CHEBI:57856"/>
        <dbReference type="ChEBI" id="CHEBI:59789"/>
        <dbReference type="ChEBI" id="CHEBI:62729"/>
        <dbReference type="ChEBI" id="CHEBI:62731"/>
        <dbReference type="EC" id="2.1.1.222"/>
    </reaction>
</comment>
<comment type="pathway">
    <text evidence="1">Cofactor biosynthesis; ubiquinone biosynthesis.</text>
</comment>
<comment type="similarity">
    <text evidence="1">Belongs to the methyltransferase superfamily. UbiG/COQ3 family.</text>
</comment>
<comment type="sequence caution" evidence="2">
    <conflict type="erroneous initiation">
        <sequence resource="EMBL-CDS" id="CAD14600"/>
    </conflict>
</comment>
<evidence type="ECO:0000255" key="1">
    <source>
        <dbReference type="HAMAP-Rule" id="MF_00472"/>
    </source>
</evidence>
<evidence type="ECO:0000305" key="2"/>
<accession>Q8Y0Z5</accession>
<name>UBIG_RALN1</name>
<protein>
    <recommendedName>
        <fullName evidence="1">Ubiquinone biosynthesis O-methyltransferase</fullName>
    </recommendedName>
    <alternativeName>
        <fullName evidence="1">2-polyprenyl-6-hydroxyphenol methylase</fullName>
        <ecNumber evidence="1">2.1.1.222</ecNumber>
    </alternativeName>
    <alternativeName>
        <fullName evidence="1">3-demethylubiquinone 3-O-methyltransferase</fullName>
        <ecNumber evidence="1">2.1.1.64</ecNumber>
    </alternativeName>
</protein>
<reference key="1">
    <citation type="journal article" date="2002" name="Nature">
        <title>Genome sequence of the plant pathogen Ralstonia solanacearum.</title>
        <authorList>
            <person name="Salanoubat M."/>
            <person name="Genin S."/>
            <person name="Artiguenave F."/>
            <person name="Gouzy J."/>
            <person name="Mangenot S."/>
            <person name="Arlat M."/>
            <person name="Billault A."/>
            <person name="Brottier P."/>
            <person name="Camus J.-C."/>
            <person name="Cattolico L."/>
            <person name="Chandler M."/>
            <person name="Choisne N."/>
            <person name="Claudel-Renard C."/>
            <person name="Cunnac S."/>
            <person name="Demange N."/>
            <person name="Gaspin C."/>
            <person name="Lavie M."/>
            <person name="Moisan A."/>
            <person name="Robert C."/>
            <person name="Saurin W."/>
            <person name="Schiex T."/>
            <person name="Siguier P."/>
            <person name="Thebault P."/>
            <person name="Whalen M."/>
            <person name="Wincker P."/>
            <person name="Levy M."/>
            <person name="Weissenbach J."/>
            <person name="Boucher C.A."/>
        </authorList>
    </citation>
    <scope>NUCLEOTIDE SEQUENCE [LARGE SCALE GENOMIC DNA]</scope>
    <source>
        <strain>ATCC BAA-1114 / GMI1000</strain>
    </source>
</reference>
<sequence>MTTTYANADPGELEKFSELAHRWWDPNSEFKPLHEINPLRLDWIQSTAPLAGKRVVDVGCGGGILSESMARAGANVKGIDLSRKALRVADLHSLEAGVAVDYEEIAAEALAAREPGSFDVVTCMEMLEHVPDPASVVRACATLVKPGGHVFFSTIHRNAKAYLLAVIGAEYVLNMLPRGTHDYAKFIRPSELAGFARTAGLEPAQLRGLEYNPLTGRYALTHDTSVNYLIATRRPDAP</sequence>
<proteinExistence type="inferred from homology"/>
<gene>
    <name evidence="1" type="primary">ubiG</name>
    <name type="ordered locus">RSc0898</name>
    <name type="ORF">RS04517</name>
</gene>
<organism>
    <name type="scientific">Ralstonia nicotianae (strain ATCC BAA-1114 / GMI1000)</name>
    <name type="common">Ralstonia solanacearum</name>
    <dbReference type="NCBI Taxonomy" id="267608"/>
    <lineage>
        <taxon>Bacteria</taxon>
        <taxon>Pseudomonadati</taxon>
        <taxon>Pseudomonadota</taxon>
        <taxon>Betaproteobacteria</taxon>
        <taxon>Burkholderiales</taxon>
        <taxon>Burkholderiaceae</taxon>
        <taxon>Ralstonia</taxon>
        <taxon>Ralstonia solanacearum species complex</taxon>
    </lineage>
</organism>
<dbReference type="EC" id="2.1.1.222" evidence="1"/>
<dbReference type="EC" id="2.1.1.64" evidence="1"/>
<dbReference type="EMBL" id="AL646052">
    <property type="protein sequence ID" value="CAD14600.1"/>
    <property type="status" value="ALT_INIT"/>
    <property type="molecule type" value="Genomic_DNA"/>
</dbReference>
<dbReference type="RefSeq" id="WP_019717804.1">
    <property type="nucleotide sequence ID" value="NC_003295.1"/>
</dbReference>
<dbReference type="SMR" id="Q8Y0Z5"/>
<dbReference type="STRING" id="267608.RSc0898"/>
<dbReference type="EnsemblBacteria" id="CAD14600">
    <property type="protein sequence ID" value="CAD14600"/>
    <property type="gene ID" value="RSc0898"/>
</dbReference>
<dbReference type="KEGG" id="rso:RSc0898"/>
<dbReference type="eggNOG" id="COG2227">
    <property type="taxonomic scope" value="Bacteria"/>
</dbReference>
<dbReference type="HOGENOM" id="CLU_042432_5_0_4"/>
<dbReference type="UniPathway" id="UPA00232"/>
<dbReference type="Proteomes" id="UP000001436">
    <property type="component" value="Chromosome"/>
</dbReference>
<dbReference type="GO" id="GO:0102208">
    <property type="term" value="F:2-polyprenyl-6-hydroxyphenol methylase activity"/>
    <property type="evidence" value="ECO:0007669"/>
    <property type="project" value="UniProtKB-EC"/>
</dbReference>
<dbReference type="GO" id="GO:0061542">
    <property type="term" value="F:3-demethylubiquinol 3-O-methyltransferase activity"/>
    <property type="evidence" value="ECO:0007669"/>
    <property type="project" value="UniProtKB-UniRule"/>
</dbReference>
<dbReference type="GO" id="GO:0010420">
    <property type="term" value="F:polyprenyldihydroxybenzoate methyltransferase activity"/>
    <property type="evidence" value="ECO:0007669"/>
    <property type="project" value="InterPro"/>
</dbReference>
<dbReference type="GO" id="GO:0032259">
    <property type="term" value="P:methylation"/>
    <property type="evidence" value="ECO:0007669"/>
    <property type="project" value="UniProtKB-KW"/>
</dbReference>
<dbReference type="CDD" id="cd02440">
    <property type="entry name" value="AdoMet_MTases"/>
    <property type="match status" value="1"/>
</dbReference>
<dbReference type="FunFam" id="3.40.50.150:FF:000028">
    <property type="entry name" value="Ubiquinone biosynthesis O-methyltransferase"/>
    <property type="match status" value="1"/>
</dbReference>
<dbReference type="Gene3D" id="3.40.50.150">
    <property type="entry name" value="Vaccinia Virus protein VP39"/>
    <property type="match status" value="1"/>
</dbReference>
<dbReference type="HAMAP" id="MF_00472">
    <property type="entry name" value="UbiG"/>
    <property type="match status" value="1"/>
</dbReference>
<dbReference type="InterPro" id="IPR029063">
    <property type="entry name" value="SAM-dependent_MTases_sf"/>
</dbReference>
<dbReference type="InterPro" id="IPR010233">
    <property type="entry name" value="UbiG_MeTrfase"/>
</dbReference>
<dbReference type="NCBIfam" id="TIGR01983">
    <property type="entry name" value="UbiG"/>
    <property type="match status" value="1"/>
</dbReference>
<dbReference type="PANTHER" id="PTHR43464">
    <property type="entry name" value="METHYLTRANSFERASE"/>
    <property type="match status" value="1"/>
</dbReference>
<dbReference type="PANTHER" id="PTHR43464:SF19">
    <property type="entry name" value="UBIQUINONE BIOSYNTHESIS O-METHYLTRANSFERASE, MITOCHONDRIAL"/>
    <property type="match status" value="1"/>
</dbReference>
<dbReference type="Pfam" id="PF13489">
    <property type="entry name" value="Methyltransf_23"/>
    <property type="match status" value="1"/>
</dbReference>
<dbReference type="SUPFAM" id="SSF53335">
    <property type="entry name" value="S-adenosyl-L-methionine-dependent methyltransferases"/>
    <property type="match status" value="1"/>
</dbReference>